<gene>
    <name type="primary">GUS1</name>
    <name type="ordered locus">YGL245W</name>
    <name type="ORF">G0583</name>
    <name type="ORF">HRB724</name>
</gene>
<evidence type="ECO:0000250" key="1"/>
<evidence type="ECO:0000269" key="2">
    <source>
    </source>
</evidence>
<evidence type="ECO:0000269" key="3">
    <source>
    </source>
</evidence>
<evidence type="ECO:0000269" key="4">
    <source>
    </source>
</evidence>
<evidence type="ECO:0000269" key="5">
    <source>
    </source>
</evidence>
<evidence type="ECO:0000269" key="6">
    <source>
    </source>
</evidence>
<evidence type="ECO:0000269" key="7">
    <source>
    </source>
</evidence>
<evidence type="ECO:0000269" key="8">
    <source>
    </source>
</evidence>
<evidence type="ECO:0000269" key="9">
    <source>
    </source>
</evidence>
<evidence type="ECO:0000305" key="10"/>
<evidence type="ECO:0007744" key="11">
    <source>
    </source>
</evidence>
<evidence type="ECO:0007829" key="12">
    <source>
        <dbReference type="PDB" id="2HRA"/>
    </source>
</evidence>
<evidence type="ECO:0007829" key="13">
    <source>
        <dbReference type="PDB" id="2HRK"/>
    </source>
</evidence>
<evidence type="ECO:0007829" key="14">
    <source>
        <dbReference type="PDB" id="2HSM"/>
    </source>
</evidence>
<feature type="chain" id="PRO_0000119739" description="Glutamate--tRNA ligase, cytoplasmic">
    <location>
        <begin position="1"/>
        <end position="708"/>
    </location>
</feature>
<feature type="region of interest" description="Interaction with ARC1">
    <location>
        <begin position="106"/>
        <end position="115"/>
    </location>
</feature>
<feature type="region of interest" description="Interaction with ARC1">
    <location>
        <begin position="141"/>
        <end position="157"/>
    </location>
</feature>
<feature type="short sequence motif" description="'HIGH' region">
    <location>
        <begin position="210"/>
        <end position="219"/>
    </location>
</feature>
<feature type="short sequence motif" description="'KMSKS' region">
    <location>
        <begin position="437"/>
        <end position="441"/>
    </location>
</feature>
<feature type="binding site" evidence="1">
    <location>
        <begin position="205"/>
        <end position="207"/>
    </location>
    <ligand>
        <name>L-glutamate</name>
        <dbReference type="ChEBI" id="CHEBI:29985"/>
    </ligand>
</feature>
<feature type="binding site" evidence="1">
    <location>
        <position position="215"/>
    </location>
    <ligand>
        <name>ATP</name>
        <dbReference type="ChEBI" id="CHEBI:30616"/>
    </ligand>
</feature>
<feature type="binding site" evidence="1">
    <location>
        <position position="241"/>
    </location>
    <ligand>
        <name>L-glutamate</name>
        <dbReference type="ChEBI" id="CHEBI:29985"/>
    </ligand>
</feature>
<feature type="binding site" evidence="1">
    <location>
        <begin position="382"/>
        <end position="386"/>
    </location>
    <ligand>
        <name>L-glutamate</name>
        <dbReference type="ChEBI" id="CHEBI:29985"/>
    </ligand>
</feature>
<feature type="binding site" evidence="1">
    <location>
        <position position="400"/>
    </location>
    <ligand>
        <name>L-glutamate</name>
        <dbReference type="ChEBI" id="CHEBI:29985"/>
    </ligand>
</feature>
<feature type="binding site" evidence="1">
    <location>
        <position position="403"/>
    </location>
    <ligand>
        <name>ATP</name>
        <dbReference type="ChEBI" id="CHEBI:30616"/>
    </ligand>
</feature>
<feature type="binding site" evidence="1">
    <location>
        <begin position="437"/>
        <end position="441"/>
    </location>
    <ligand>
        <name>ATP</name>
        <dbReference type="ChEBI" id="CHEBI:30616"/>
    </ligand>
</feature>
<feature type="modified residue" description="Phosphothreonine" evidence="11">
    <location>
        <position position="300"/>
    </location>
</feature>
<feature type="mutagenesis site" description="Abolishes interaction with ARC1." evidence="5">
    <original>R</original>
    <variation>A</variation>
    <location>
        <position position="148"/>
    </location>
</feature>
<feature type="sequence conflict" description="In Ref. 1; AAA78905." evidence="10" ref="1">
    <original>E</original>
    <variation>D</variation>
    <location>
        <position position="209"/>
    </location>
</feature>
<feature type="sequence conflict" description="In Ref. 1; AAA78905." evidence="10" ref="1">
    <original>V</original>
    <variation>A</variation>
    <location>
        <position position="473"/>
    </location>
</feature>
<feature type="sequence conflict" description="In Ref. 1; AAA78905." evidence="10" ref="1">
    <original>P</original>
    <variation>S</variation>
    <location>
        <position position="510"/>
    </location>
</feature>
<feature type="sequence conflict" description="In Ref. 1; AAA78905." evidence="10" ref="1">
    <original>V</original>
    <variation>M</variation>
    <location>
        <position position="546"/>
    </location>
</feature>
<feature type="strand" evidence="12">
    <location>
        <begin position="3"/>
        <end position="8"/>
    </location>
</feature>
<feature type="helix" evidence="12">
    <location>
        <begin position="16"/>
        <end position="28"/>
    </location>
</feature>
<feature type="strand" evidence="12">
    <location>
        <begin position="32"/>
        <end position="38"/>
    </location>
</feature>
<feature type="strand" evidence="14">
    <location>
        <begin position="41"/>
        <end position="43"/>
    </location>
</feature>
<feature type="strand" evidence="12">
    <location>
        <begin position="45"/>
        <end position="48"/>
    </location>
</feature>
<feature type="helix" evidence="12">
    <location>
        <begin position="55"/>
        <end position="62"/>
    </location>
</feature>
<feature type="turn" evidence="12">
    <location>
        <begin position="63"/>
        <end position="66"/>
    </location>
</feature>
<feature type="helix" evidence="12">
    <location>
        <begin position="72"/>
        <end position="84"/>
    </location>
</feature>
<feature type="turn" evidence="12">
    <location>
        <begin position="85"/>
        <end position="87"/>
    </location>
</feature>
<feature type="helix" evidence="12">
    <location>
        <begin position="91"/>
        <end position="104"/>
    </location>
</feature>
<feature type="turn" evidence="13">
    <location>
        <begin position="105"/>
        <end position="107"/>
    </location>
</feature>
<feature type="helix" evidence="12">
    <location>
        <begin position="119"/>
        <end position="130"/>
    </location>
</feature>
<feature type="helix" evidence="12">
    <location>
        <begin position="134"/>
        <end position="140"/>
    </location>
</feature>
<feature type="helix" evidence="12">
    <location>
        <begin position="144"/>
        <end position="154"/>
    </location>
</feature>
<feature type="helix" evidence="12">
    <location>
        <begin position="157"/>
        <end position="160"/>
    </location>
</feature>
<feature type="helix" evidence="12">
    <location>
        <begin position="162"/>
        <end position="177"/>
    </location>
</feature>
<organism>
    <name type="scientific">Saccharomyces cerevisiae (strain ATCC 204508 / S288c)</name>
    <name type="common">Baker's yeast</name>
    <dbReference type="NCBI Taxonomy" id="559292"/>
    <lineage>
        <taxon>Eukaryota</taxon>
        <taxon>Fungi</taxon>
        <taxon>Dikarya</taxon>
        <taxon>Ascomycota</taxon>
        <taxon>Saccharomycotina</taxon>
        <taxon>Saccharomycetes</taxon>
        <taxon>Saccharomycetales</taxon>
        <taxon>Saccharomycetaceae</taxon>
        <taxon>Saccharomyces</taxon>
    </lineage>
</organism>
<protein>
    <recommendedName>
        <fullName>Glutamate--tRNA ligase, cytoplasmic</fullName>
        <ecNumber>6.1.1.17</ecNumber>
    </recommendedName>
    <alternativeName>
        <fullName>Glutamyl-tRNA synthetase</fullName>
        <shortName>(c)ERS</shortName>
        <shortName>GluRS</shortName>
    </alternativeName>
    <alternativeName>
        <fullName>P85</fullName>
    </alternativeName>
</protein>
<dbReference type="EC" id="6.1.1.17"/>
<dbReference type="EMBL" id="U32265">
    <property type="protein sequence ID" value="AAA78905.1"/>
    <property type="status" value="ALT_SEQ"/>
    <property type="molecule type" value="Genomic_DNA"/>
</dbReference>
<dbReference type="EMBL" id="Z49149">
    <property type="protein sequence ID" value="CAA89009.1"/>
    <property type="status" value="ALT_INIT"/>
    <property type="molecule type" value="Genomic_DNA"/>
</dbReference>
<dbReference type="EMBL" id="Z72767">
    <property type="protein sequence ID" value="CAA96964.1"/>
    <property type="status" value="ALT_INIT"/>
    <property type="molecule type" value="Genomic_DNA"/>
</dbReference>
<dbReference type="EMBL" id="X94357">
    <property type="protein sequence ID" value="CAA64142.1"/>
    <property type="status" value="ALT_INIT"/>
    <property type="molecule type" value="Genomic_DNA"/>
</dbReference>
<dbReference type="EMBL" id="BK006941">
    <property type="protein sequence ID" value="DAA07874.1"/>
    <property type="molecule type" value="Genomic_DNA"/>
</dbReference>
<dbReference type="PIR" id="S53934">
    <property type="entry name" value="S53934"/>
</dbReference>
<dbReference type="RefSeq" id="NP_011269.2">
    <property type="nucleotide sequence ID" value="NM_001181111.1"/>
</dbReference>
<dbReference type="PDB" id="2HRA">
    <property type="method" value="X-ray"/>
    <property type="resolution" value="1.90 A"/>
    <property type="chains" value="A/B=1-191"/>
</dbReference>
<dbReference type="PDB" id="2HRK">
    <property type="method" value="X-ray"/>
    <property type="resolution" value="2.05 A"/>
    <property type="chains" value="A=1-191"/>
</dbReference>
<dbReference type="PDB" id="2HSM">
    <property type="method" value="X-ray"/>
    <property type="resolution" value="3.00 A"/>
    <property type="chains" value="A=1-191"/>
</dbReference>
<dbReference type="PDBsum" id="2HRA"/>
<dbReference type="PDBsum" id="2HRK"/>
<dbReference type="PDBsum" id="2HSM"/>
<dbReference type="SMR" id="P46655"/>
<dbReference type="BioGRID" id="32995">
    <property type="interactions" value="415"/>
</dbReference>
<dbReference type="ComplexPortal" id="CPX-1947">
    <property type="entry name" value="Methionyl glutamyl tRNA synthetase complex"/>
</dbReference>
<dbReference type="DIP" id="DIP-2212N"/>
<dbReference type="FunCoup" id="P46655">
    <property type="interactions" value="1050"/>
</dbReference>
<dbReference type="IntAct" id="P46655">
    <property type="interactions" value="57"/>
</dbReference>
<dbReference type="MINT" id="P46655"/>
<dbReference type="STRING" id="4932.YGL245W"/>
<dbReference type="iPTMnet" id="P46655"/>
<dbReference type="PaxDb" id="4932-YGL245W"/>
<dbReference type="PeptideAtlas" id="P46655"/>
<dbReference type="EnsemblFungi" id="YGL245W_mRNA">
    <property type="protein sequence ID" value="YGL245W"/>
    <property type="gene ID" value="YGL245W"/>
</dbReference>
<dbReference type="GeneID" id="852606"/>
<dbReference type="KEGG" id="sce:YGL245W"/>
<dbReference type="AGR" id="SGD:S000003214"/>
<dbReference type="SGD" id="S000003214">
    <property type="gene designation" value="GUS1"/>
</dbReference>
<dbReference type="VEuPathDB" id="FungiDB:YGL245W"/>
<dbReference type="eggNOG" id="KOG1147">
    <property type="taxonomic scope" value="Eukaryota"/>
</dbReference>
<dbReference type="GeneTree" id="ENSGT00550000074815"/>
<dbReference type="HOGENOM" id="CLU_001882_1_2_1"/>
<dbReference type="InParanoid" id="P46655"/>
<dbReference type="OMA" id="CPVVDSH"/>
<dbReference type="OrthoDB" id="10250478at2759"/>
<dbReference type="BioCyc" id="YEAST:G3O-30716-MONOMER"/>
<dbReference type="BRENDA" id="6.1.1.17">
    <property type="organism ID" value="984"/>
</dbReference>
<dbReference type="SABIO-RK" id="P46655"/>
<dbReference type="BioGRID-ORCS" id="852606">
    <property type="hits" value="0 hits in 10 CRISPR screens"/>
</dbReference>
<dbReference type="CD-CODE" id="E03F929F">
    <property type="entry name" value="Stress granule"/>
</dbReference>
<dbReference type="EvolutionaryTrace" id="P46655"/>
<dbReference type="PRO" id="PR:P46655"/>
<dbReference type="Proteomes" id="UP000002311">
    <property type="component" value="Chromosome VII"/>
</dbReference>
<dbReference type="RNAct" id="P46655">
    <property type="molecule type" value="protein"/>
</dbReference>
<dbReference type="GO" id="GO:0005737">
    <property type="term" value="C:cytoplasm"/>
    <property type="evidence" value="ECO:0000314"/>
    <property type="project" value="SGD"/>
</dbReference>
<dbReference type="GO" id="GO:0010494">
    <property type="term" value="C:cytoplasmic stress granule"/>
    <property type="evidence" value="ECO:0000314"/>
    <property type="project" value="SGD"/>
</dbReference>
<dbReference type="GO" id="GO:0005829">
    <property type="term" value="C:cytosol"/>
    <property type="evidence" value="ECO:0000318"/>
    <property type="project" value="GO_Central"/>
</dbReference>
<dbReference type="GO" id="GO:0017102">
    <property type="term" value="C:methionyl glutamyl tRNA synthetase complex"/>
    <property type="evidence" value="ECO:0000314"/>
    <property type="project" value="SGD"/>
</dbReference>
<dbReference type="GO" id="GO:0005739">
    <property type="term" value="C:mitochondrion"/>
    <property type="evidence" value="ECO:0000314"/>
    <property type="project" value="SGD"/>
</dbReference>
<dbReference type="GO" id="GO:0005524">
    <property type="term" value="F:ATP binding"/>
    <property type="evidence" value="ECO:0007669"/>
    <property type="project" value="UniProtKB-KW"/>
</dbReference>
<dbReference type="GO" id="GO:0004818">
    <property type="term" value="F:glutamate-tRNA ligase activity"/>
    <property type="evidence" value="ECO:0000314"/>
    <property type="project" value="SGD"/>
</dbReference>
<dbReference type="GO" id="GO:0003729">
    <property type="term" value="F:mRNA binding"/>
    <property type="evidence" value="ECO:0007005"/>
    <property type="project" value="SGD"/>
</dbReference>
<dbReference type="GO" id="GO:1990825">
    <property type="term" value="F:sequence-specific mRNA binding"/>
    <property type="evidence" value="ECO:0000314"/>
    <property type="project" value="SGD"/>
</dbReference>
<dbReference type="GO" id="GO:0006424">
    <property type="term" value="P:glutamyl-tRNA aminoacylation"/>
    <property type="evidence" value="ECO:0000314"/>
    <property type="project" value="SGD"/>
</dbReference>
<dbReference type="GO" id="GO:0006431">
    <property type="term" value="P:methionyl-tRNA aminoacylation"/>
    <property type="evidence" value="ECO:0000303"/>
    <property type="project" value="ComplexPortal"/>
</dbReference>
<dbReference type="CDD" id="cd10306">
    <property type="entry name" value="GST_C_GluRS_N"/>
    <property type="match status" value="1"/>
</dbReference>
<dbReference type="FunFam" id="3.40.50.620:FF:000070">
    <property type="entry name" value="Bifunctional glutamate/proline--tRNA ligase"/>
    <property type="match status" value="1"/>
</dbReference>
<dbReference type="FunFam" id="1.10.1160.10:FF:000001">
    <property type="entry name" value="Glutamine--tRNA ligase"/>
    <property type="match status" value="1"/>
</dbReference>
<dbReference type="FunFam" id="3.90.800.10:FF:000001">
    <property type="entry name" value="Glutamine--tRNA ligase"/>
    <property type="match status" value="1"/>
</dbReference>
<dbReference type="FunFam" id="2.40.240.10:FF:000004">
    <property type="entry name" value="Glutamyl-tRNA synthetase, cytoplasmic"/>
    <property type="match status" value="1"/>
</dbReference>
<dbReference type="FunFam" id="1.20.1050.10:FF:000036">
    <property type="entry name" value="Putative glutamyl-tRNA synthetase"/>
    <property type="match status" value="1"/>
</dbReference>
<dbReference type="Gene3D" id="1.20.1050.10">
    <property type="match status" value="1"/>
</dbReference>
<dbReference type="Gene3D" id="3.40.30.70">
    <property type="match status" value="1"/>
</dbReference>
<dbReference type="Gene3D" id="1.10.1160.10">
    <property type="entry name" value="Glutamyl-trna Synthetase, Domain 2"/>
    <property type="match status" value="1"/>
</dbReference>
<dbReference type="Gene3D" id="3.90.800.10">
    <property type="entry name" value="Glutamyl-tRNA Synthetase, Domain 3"/>
    <property type="match status" value="1"/>
</dbReference>
<dbReference type="Gene3D" id="3.40.50.620">
    <property type="entry name" value="HUPs"/>
    <property type="match status" value="1"/>
</dbReference>
<dbReference type="Gene3D" id="2.40.240.10">
    <property type="entry name" value="Ribosomal Protein L25, Chain P"/>
    <property type="match status" value="1"/>
</dbReference>
<dbReference type="HAMAP" id="MF_02076">
    <property type="entry name" value="Glu_tRNA_synth_type2"/>
    <property type="match status" value="1"/>
</dbReference>
<dbReference type="InterPro" id="IPR001412">
    <property type="entry name" value="aa-tRNA-synth_I_CS"/>
</dbReference>
<dbReference type="InterPro" id="IPR050132">
    <property type="entry name" value="Gln/Glu-tRNA_Ligase"/>
</dbReference>
<dbReference type="InterPro" id="IPR004526">
    <property type="entry name" value="Glu-tRNA-synth_arc/euk"/>
</dbReference>
<dbReference type="InterPro" id="IPR000924">
    <property type="entry name" value="Glu/Gln-tRNA-synth"/>
</dbReference>
<dbReference type="InterPro" id="IPR020058">
    <property type="entry name" value="Glu/Gln-tRNA-synth_Ib_cat-dom"/>
</dbReference>
<dbReference type="InterPro" id="IPR020059">
    <property type="entry name" value="Glu/Gln-tRNA-synth_Ib_codon-bd"/>
</dbReference>
<dbReference type="InterPro" id="IPR020061">
    <property type="entry name" value="Glu_tRNA_lig_a-bdl"/>
</dbReference>
<dbReference type="InterPro" id="IPR036282">
    <property type="entry name" value="Glutathione-S-Trfase_C_sf"/>
</dbReference>
<dbReference type="InterPro" id="IPR020056">
    <property type="entry name" value="Rbsml_bL25/Gln-tRNA_synth_N"/>
</dbReference>
<dbReference type="InterPro" id="IPR011035">
    <property type="entry name" value="Ribosomal_bL25/Gln-tRNA_synth"/>
</dbReference>
<dbReference type="InterPro" id="IPR014729">
    <property type="entry name" value="Rossmann-like_a/b/a_fold"/>
</dbReference>
<dbReference type="InterPro" id="IPR049437">
    <property type="entry name" value="tRNA-synt_1c_C2"/>
</dbReference>
<dbReference type="NCBIfam" id="TIGR00463">
    <property type="entry name" value="gltX_arch"/>
    <property type="match status" value="1"/>
</dbReference>
<dbReference type="PANTHER" id="PTHR43097:SF5">
    <property type="entry name" value="GLUTAMATE--TRNA LIGASE"/>
    <property type="match status" value="1"/>
</dbReference>
<dbReference type="PANTHER" id="PTHR43097">
    <property type="entry name" value="GLUTAMINE-TRNA LIGASE"/>
    <property type="match status" value="1"/>
</dbReference>
<dbReference type="Pfam" id="PF00749">
    <property type="entry name" value="tRNA-synt_1c"/>
    <property type="match status" value="1"/>
</dbReference>
<dbReference type="Pfam" id="PF03950">
    <property type="entry name" value="tRNA-synt_1c_C"/>
    <property type="match status" value="1"/>
</dbReference>
<dbReference type="Pfam" id="PF20974">
    <property type="entry name" value="tRNA-synt_1c_C2"/>
    <property type="match status" value="1"/>
</dbReference>
<dbReference type="PRINTS" id="PR00987">
    <property type="entry name" value="TRNASYNTHGLU"/>
</dbReference>
<dbReference type="SUPFAM" id="SSF47616">
    <property type="entry name" value="GST C-terminal domain-like"/>
    <property type="match status" value="1"/>
</dbReference>
<dbReference type="SUPFAM" id="SSF52374">
    <property type="entry name" value="Nucleotidylyl transferase"/>
    <property type="match status" value="1"/>
</dbReference>
<dbReference type="SUPFAM" id="SSF50715">
    <property type="entry name" value="Ribosomal protein L25-like"/>
    <property type="match status" value="1"/>
</dbReference>
<dbReference type="PROSITE" id="PS00178">
    <property type="entry name" value="AA_TRNA_LIGASE_I"/>
    <property type="match status" value="1"/>
</dbReference>
<keyword id="KW-0002">3D-structure</keyword>
<keyword id="KW-0030">Aminoacyl-tRNA synthetase</keyword>
<keyword id="KW-0067">ATP-binding</keyword>
<keyword id="KW-0963">Cytoplasm</keyword>
<keyword id="KW-0436">Ligase</keyword>
<keyword id="KW-0496">Mitochondrion</keyword>
<keyword id="KW-0547">Nucleotide-binding</keyword>
<keyword id="KW-0597">Phosphoprotein</keyword>
<keyword id="KW-0648">Protein biosynthesis</keyword>
<keyword id="KW-1185">Reference proteome</keyword>
<name>SYEC_YEAST</name>
<comment type="function">
    <text evidence="2 7">Catalyzes the attachment of glutamate to tRNA(Glu) in a two-step reaction: glutamate is first activated by ATP to form Glu-AMP and then transferred to the acceptor end of tRNA(Glu). In mitochondria, constitutes the nondiscriminating glutamyl-tRNA synthase that generates the mitochondrial mischarged glutamyl-tRNA(Gln) substrate for the tRNA-dependent amidotransferase (AdT), which generates mitochondrial glutaminyl-tRNA(Gln) by transamidation of glutamyl-tRNA(Gln).</text>
</comment>
<comment type="catalytic activity">
    <reaction evidence="2">
        <text>tRNA(Glu) + L-glutamate + ATP = L-glutamyl-tRNA(Glu) + AMP + diphosphate</text>
        <dbReference type="Rhea" id="RHEA:23540"/>
        <dbReference type="Rhea" id="RHEA-COMP:9663"/>
        <dbReference type="Rhea" id="RHEA-COMP:9680"/>
        <dbReference type="ChEBI" id="CHEBI:29985"/>
        <dbReference type="ChEBI" id="CHEBI:30616"/>
        <dbReference type="ChEBI" id="CHEBI:33019"/>
        <dbReference type="ChEBI" id="CHEBI:78442"/>
        <dbReference type="ChEBI" id="CHEBI:78520"/>
        <dbReference type="ChEBI" id="CHEBI:456215"/>
        <dbReference type="EC" id="6.1.1.17"/>
    </reaction>
</comment>
<comment type="subunit">
    <text evidence="3 5 6 8 9">Component of a yeast aminoacyl-tRNA synthase (aaRS) complex formed by methionyl-tRNA synthase MES1, glutamyl-tRNA synthase GUS1 and the tRNA aminoacylation cofactor ARC1 in a stoichiometric complex. Interacts (via N-ter) with ARC1 (via N-ter). Can also form a stable binary complex with ARC1 that is functional in terms of aminoacylation. ARC1 increases the affinity for cognate tRNAs due to the presence of a tRNA binding domain in the middle and C-terminal part of ARC1.</text>
</comment>
<comment type="interaction">
    <interactant intactId="EBI-18665">
        <id>P46655</id>
    </interactant>
    <interactant intactId="EBI-7224">
        <id>P46672</id>
        <label>ARC1</label>
    </interactant>
    <organismsDiffer>false</organismsDiffer>
    <experiments>8</experiments>
</comment>
<comment type="subcellular location">
    <subcellularLocation>
        <location>Cytoplasm</location>
    </subcellularLocation>
    <subcellularLocation>
        <location>Mitochondrion</location>
    </subcellularLocation>
    <text>Largely excluded from the nucleus.</text>
</comment>
<comment type="miscellaneous">
    <text evidence="4">Present with 48700 molecules/cell in log phase SD medium.</text>
</comment>
<comment type="similarity">
    <text evidence="10">Belongs to the class-I aminoacyl-tRNA synthetase family. Glutamate--tRNA ligase type 2 subfamily.</text>
</comment>
<comment type="sequence caution" evidence="10">
    <conflict type="erroneous initiation">
        <sequence resource="EMBL-CDS" id="AAA78905"/>
    </conflict>
    <text>Extended N-terminus.</text>
</comment>
<comment type="sequence caution" evidence="10">
    <conflict type="frameshift">
        <sequence resource="EMBL-CDS" id="AAA78905"/>
    </conflict>
</comment>
<comment type="sequence caution" evidence="10">
    <conflict type="erroneous initiation">
        <sequence resource="EMBL-CDS" id="CAA64142"/>
    </conflict>
    <text>Extended N-terminus.</text>
</comment>
<comment type="sequence caution" evidence="10">
    <conflict type="erroneous initiation">
        <sequence resource="EMBL-CDS" id="CAA89009"/>
    </conflict>
    <text>Extended N-terminus.</text>
</comment>
<comment type="sequence caution" evidence="10">
    <conflict type="erroneous initiation">
        <sequence resource="EMBL-CDS" id="CAA96964"/>
    </conflict>
    <text>Extended N-terminus.</text>
</comment>
<sequence length="708" mass="80843">MPSTLTINGKAPIVAYAELIAARIVNALAPNSIAIKLVDDKKAPAAKLDDATEDVFNKITSKFAAIFDNGDKEQVAKWVNLAQKELVIKNFAKLSQSLETLDSQLNLRTFILGGLKYSAADVACWGALRSNGMCGSIIKNKVDVNVSRWYTLLEMDPIFGEAHDFLSKSLLELKKSANVGKKKETHKANFEIDLPDAKMGEVVTRFPPEPSGYLHIGHAKAALLNQYFAQAYKGKLIIRFDDTNPSKEKEEFQDSILEDLDLLGIKGDRITYSSDYFQEMYDYCVQMIKDGKAYCDDTPTEKMREERMDGVASARRDRSVEENLRIFTEEMKNGTEEGLKNCVRAKIDYKALNKTLRDPVIYRCNLTPHHRTGSTWKIYPTYDFCVPIVDAIEGVTHALRTIEYRDRNAQYDWMLQALRLRKVHIWDFARINFVRTLLSKRKLQWMVDKDLVGNWDDPRFPTVRGVRRRGMTVEGLRNFVLSQGPSRNVINLEWNLIWAFNKKVIDPIAPRHTAIVNPVKIHLEGSEAPQEPKIEMKPKHKKNPAVGEKKVIYYKDIVVDKDDADVINVDEEVTLMDWGNVIITKKNDDGSMVAKLNLEGDFKKTKHKLTWLADTKDVVPVDLVDFDHLITKDRLEEDESFEDFLTPQTEFHTDAIADLNVKDMKIGDIIQFERKGYYRLDALPKDGKPYVFFTIPDGKSVNKYGAKK</sequence>
<accession>P46655</accession>
<accession>D6VV90</accession>
<proteinExistence type="evidence at protein level"/>
<reference key="1">
    <citation type="submission" date="1995-07" db="EMBL/GenBank/DDBJ databases">
        <title>Isolation and sequence characterization of the gene encoding the yeast cytosolic glutamyl-tRNA synthetase.</title>
        <authorList>
            <person name="Frantz J.D."/>
            <person name="Gilbert W."/>
        </authorList>
    </citation>
    <scope>NUCLEOTIDE SEQUENCE [GENOMIC DNA]</scope>
</reference>
<reference key="2">
    <citation type="journal article" date="1995" name="Yeast">
        <title>The sequence of an 11.1 kb DNA fragment between ADH4 and ADE5 on the left arm of chromosome VII, reveals the presence of eight open reading frames.</title>
        <authorList>
            <person name="Vandenbol M."/>
            <person name="Durand P."/>
            <person name="Portetelle D."/>
            <person name="Hilger F."/>
        </authorList>
    </citation>
    <scope>NUCLEOTIDE SEQUENCE [GENOMIC DNA]</scope>
    <source>
        <strain>ATCC 204508 / S288c</strain>
    </source>
</reference>
<reference key="3">
    <citation type="journal article" date="1997" name="Nature">
        <title>The nucleotide sequence of Saccharomyces cerevisiae chromosome VII.</title>
        <authorList>
            <person name="Tettelin H."/>
            <person name="Agostoni-Carbone M.L."/>
            <person name="Albermann K."/>
            <person name="Albers M."/>
            <person name="Arroyo J."/>
            <person name="Backes U."/>
            <person name="Barreiros T."/>
            <person name="Bertani I."/>
            <person name="Bjourson A.J."/>
            <person name="Brueckner M."/>
            <person name="Bruschi C.V."/>
            <person name="Carignani G."/>
            <person name="Castagnoli L."/>
            <person name="Cerdan E."/>
            <person name="Clemente M.L."/>
            <person name="Coblenz A."/>
            <person name="Coglievina M."/>
            <person name="Coissac E."/>
            <person name="Defoor E."/>
            <person name="Del Bino S."/>
            <person name="Delius H."/>
            <person name="Delneri D."/>
            <person name="de Wergifosse P."/>
            <person name="Dujon B."/>
            <person name="Durand P."/>
            <person name="Entian K.-D."/>
            <person name="Eraso P."/>
            <person name="Escribano V."/>
            <person name="Fabiani L."/>
            <person name="Fartmann B."/>
            <person name="Feroli F."/>
            <person name="Feuermann M."/>
            <person name="Frontali L."/>
            <person name="Garcia-Gonzalez M."/>
            <person name="Garcia-Saez M.I."/>
            <person name="Goffeau A."/>
            <person name="Guerreiro P."/>
            <person name="Hani J."/>
            <person name="Hansen M."/>
            <person name="Hebling U."/>
            <person name="Hernandez K."/>
            <person name="Heumann K."/>
            <person name="Hilger F."/>
            <person name="Hofmann B."/>
            <person name="Indge K.J."/>
            <person name="James C.M."/>
            <person name="Klima R."/>
            <person name="Koetter P."/>
            <person name="Kramer B."/>
            <person name="Kramer W."/>
            <person name="Lauquin G."/>
            <person name="Leuther H."/>
            <person name="Louis E.J."/>
            <person name="Maillier E."/>
            <person name="Marconi A."/>
            <person name="Martegani E."/>
            <person name="Mazon M.J."/>
            <person name="Mazzoni C."/>
            <person name="McReynolds A.D.K."/>
            <person name="Melchioretto P."/>
            <person name="Mewes H.-W."/>
            <person name="Minenkova O."/>
            <person name="Mueller-Auer S."/>
            <person name="Nawrocki A."/>
            <person name="Netter P."/>
            <person name="Neu R."/>
            <person name="Nombela C."/>
            <person name="Oliver S.G."/>
            <person name="Panzeri L."/>
            <person name="Paoluzi S."/>
            <person name="Plevani P."/>
            <person name="Portetelle D."/>
            <person name="Portillo F."/>
            <person name="Potier S."/>
            <person name="Purnelle B."/>
            <person name="Rieger M."/>
            <person name="Riles L."/>
            <person name="Rinaldi T."/>
            <person name="Robben J."/>
            <person name="Rodrigues-Pousada C."/>
            <person name="Rodriguez-Belmonte E."/>
            <person name="Rodriguez-Torres A.M."/>
            <person name="Rose M."/>
            <person name="Ruzzi M."/>
            <person name="Saliola M."/>
            <person name="Sanchez-Perez M."/>
            <person name="Schaefer B."/>
            <person name="Schaefer M."/>
            <person name="Scharfe M."/>
            <person name="Schmidheini T."/>
            <person name="Schreer A."/>
            <person name="Skala J."/>
            <person name="Souciet J.-L."/>
            <person name="Steensma H.Y."/>
            <person name="Talla E."/>
            <person name="Thierry A."/>
            <person name="Vandenbol M."/>
            <person name="van der Aart Q.J.M."/>
            <person name="Van Dyck L."/>
            <person name="Vanoni M."/>
            <person name="Verhasselt P."/>
            <person name="Voet M."/>
            <person name="Volckaert G."/>
            <person name="Wambutt R."/>
            <person name="Watson M.D."/>
            <person name="Weber N."/>
            <person name="Wedler E."/>
            <person name="Wedler H."/>
            <person name="Wipfli P."/>
            <person name="Wolf K."/>
            <person name="Wright L.F."/>
            <person name="Zaccaria P."/>
            <person name="Zimmermann M."/>
            <person name="Zollner A."/>
            <person name="Kleine K."/>
        </authorList>
    </citation>
    <scope>NUCLEOTIDE SEQUENCE [LARGE SCALE GENOMIC DNA]</scope>
    <source>
        <strain>ATCC 204508 / S288c</strain>
    </source>
</reference>
<reference key="4">
    <citation type="journal article" date="2014" name="G3 (Bethesda)">
        <title>The reference genome sequence of Saccharomyces cerevisiae: Then and now.</title>
        <authorList>
            <person name="Engel S.R."/>
            <person name="Dietrich F.S."/>
            <person name="Fisk D.G."/>
            <person name="Binkley G."/>
            <person name="Balakrishnan R."/>
            <person name="Costanzo M.C."/>
            <person name="Dwight S.S."/>
            <person name="Hitz B.C."/>
            <person name="Karra K."/>
            <person name="Nash R.S."/>
            <person name="Weng S."/>
            <person name="Wong E.D."/>
            <person name="Lloyd P."/>
            <person name="Skrzypek M.S."/>
            <person name="Miyasato S.R."/>
            <person name="Simison M."/>
            <person name="Cherry J.M."/>
        </authorList>
    </citation>
    <scope>GENOME REANNOTATION</scope>
    <source>
        <strain>ATCC 204508 / S288c</strain>
    </source>
</reference>
<reference key="5">
    <citation type="journal article" date="1996" name="Yeast">
        <title>Sequence of a 39,411 bp DNA fragment covering the left end of chromosome VII of Saccharomyces cerevisiae.</title>
        <authorList>
            <person name="Coissac E."/>
            <person name="Maillier E."/>
            <person name="Robineau S."/>
            <person name="Netter P."/>
        </authorList>
    </citation>
    <scope>NUCLEOTIDE SEQUENCE [GENOMIC DNA] OF 1-129</scope>
    <source>
        <strain>ATCC 96604 / S288c / FY1679</strain>
    </source>
</reference>
<reference key="6">
    <citation type="journal article" date="1996" name="EMBO J.">
        <title>The yeast protein Arc1p binds to tRNA and functions as a cofactor for the methionyl- and glutamyl-tRNA synthetases.</title>
        <authorList>
            <person name="Simos G."/>
            <person name="Segref A."/>
            <person name="Fasiolo F."/>
            <person name="Hellmuth K."/>
            <person name="Shevshenko A."/>
            <person name="Mann M."/>
            <person name="Hurt E.C."/>
        </authorList>
    </citation>
    <scope>INTERACTION WITH ARC1</scope>
</reference>
<reference key="7">
    <citation type="journal article" date="1998" name="Mol. Cell">
        <title>A conserved domain within Arc1p delivers tRNA to aminoacyl-tRNA synthetases.</title>
        <authorList>
            <person name="Simos G."/>
            <person name="Sauer A."/>
            <person name="Fasiolo F."/>
            <person name="Hurt E.C."/>
        </authorList>
    </citation>
    <scope>INTERACTION WITH ARC1</scope>
</reference>
<reference key="8">
    <citation type="journal article" date="2001" name="EMBO J.">
        <title>The intracellular location of two aminoacyl-tRNA synthetases depends on complex formation with Arc1p.</title>
        <authorList>
            <person name="Galani K."/>
            <person name="Grosshans H."/>
            <person name="Deinert K."/>
            <person name="Hurt E.C."/>
            <person name="Simos G."/>
        </authorList>
    </citation>
    <scope>SUBUNIT</scope>
    <scope>INTERACTION WITH ARC1</scope>
    <scope>SUBCELLULAR LOCATION</scope>
</reference>
<reference key="9">
    <citation type="journal article" date="2001" name="J. Biol. Chem.">
        <title>Arc1p organizes the yeast aminoacyl-tRNA synthetase complex and stabilizes its interaction with the cognate tRNAs.</title>
        <authorList>
            <person name="Deinert K."/>
            <person name="Fasiolo F."/>
            <person name="Hurt E.C."/>
            <person name="Simos G."/>
        </authorList>
    </citation>
    <scope>FUNCTION</scope>
    <scope>CATALYTIC ACTIVITY</scope>
</reference>
<reference key="10">
    <citation type="journal article" date="2003" name="Nature">
        <title>Sequencing and comparison of yeast species to identify genes and regulatory elements.</title>
        <authorList>
            <person name="Kellis M."/>
            <person name="Patterson N."/>
            <person name="Endrizzi M."/>
            <person name="Birren B.W."/>
            <person name="Lander E.S."/>
        </authorList>
    </citation>
    <scope>IDENTIFICATION OF PROBABLE INITIATION SITE</scope>
</reference>
<reference key="11">
    <citation type="journal article" date="2003" name="Nature">
        <title>Global analysis of protein localization in budding yeast.</title>
        <authorList>
            <person name="Huh W.-K."/>
            <person name="Falvo J.V."/>
            <person name="Gerke L.C."/>
            <person name="Carroll A.S."/>
            <person name="Howson R.W."/>
            <person name="Weissman J.S."/>
            <person name="O'Shea E.K."/>
        </authorList>
    </citation>
    <scope>SUBCELLULAR LOCATION [LARGE SCALE ANALYSIS]</scope>
</reference>
<reference key="12">
    <citation type="journal article" date="2003" name="Nature">
        <title>Global analysis of protein expression in yeast.</title>
        <authorList>
            <person name="Ghaemmaghami S."/>
            <person name="Huh W.-K."/>
            <person name="Bower K."/>
            <person name="Howson R.W."/>
            <person name="Belle A."/>
            <person name="Dephoure N."/>
            <person name="O'Shea E.K."/>
            <person name="Weissman J.S."/>
        </authorList>
    </citation>
    <scope>LEVEL OF PROTEIN EXPRESSION [LARGE SCALE ANALYSIS]</scope>
</reference>
<reference key="13">
    <citation type="journal article" date="2008" name="Mol. Cell. Proteomics">
        <title>A multidimensional chromatography technology for in-depth phosphoproteome analysis.</title>
        <authorList>
            <person name="Albuquerque C.P."/>
            <person name="Smolka M.B."/>
            <person name="Payne S.H."/>
            <person name="Bafna V."/>
            <person name="Eng J."/>
            <person name="Zhou H."/>
        </authorList>
    </citation>
    <scope>PHOSPHORYLATION [LARGE SCALE ANALYSIS] AT THR-300</scope>
    <scope>IDENTIFICATION BY MASS SPECTROMETRY [LARGE SCALE ANALYSIS]</scope>
</reference>
<reference key="14">
    <citation type="journal article" date="2009" name="Genes Dev.">
        <title>Yeast mitochondrial Gln-tRNA(Gln) is generated by a GatFAB-mediated transamidation pathway involving Arc1p-controlled subcellular sorting of cytosolic GluRS.</title>
        <authorList>
            <person name="Frechin M."/>
            <person name="Senger B."/>
            <person name="Braye M."/>
            <person name="Kern D."/>
            <person name="Martin R.P."/>
            <person name="Becker H.D."/>
        </authorList>
    </citation>
    <scope>FUNCTION</scope>
    <scope>SUBCELLULAR LOCATION</scope>
</reference>
<reference key="15">
    <citation type="journal article" date="2012" name="Proc. Natl. Acad. Sci. U.S.A.">
        <title>N-terminal acetylome analyses and functional insights of the N-terminal acetyltransferase NatB.</title>
        <authorList>
            <person name="Van Damme P."/>
            <person name="Lasa M."/>
            <person name="Polevoda B."/>
            <person name="Gazquez C."/>
            <person name="Elosegui-Artola A."/>
            <person name="Kim D.S."/>
            <person name="De Juan-Pardo E."/>
            <person name="Demeyer K."/>
            <person name="Hole K."/>
            <person name="Larrea E."/>
            <person name="Timmerman E."/>
            <person name="Prieto J."/>
            <person name="Arnesen T."/>
            <person name="Sherman F."/>
            <person name="Gevaert K."/>
            <person name="Aldabe R."/>
        </authorList>
    </citation>
    <scope>IDENTIFICATION BY MASS SPECTROMETRY [LARGE SCALE ANALYSIS]</scope>
</reference>
<reference key="16">
    <citation type="journal article" date="2006" name="Acta Crystallogr. D">
        <title>Structures of the interacting domains from yeast glutamyl-tRNA synthetase and tRNA-aminoacylation and nuclear-export cofactor Arc1p reveal a novel function for an old fold.</title>
        <authorList>
            <person name="Simader H."/>
            <person name="Hothorn M."/>
            <person name="Suck D."/>
        </authorList>
    </citation>
    <scope>X-RAY CRYSTALLOGRAPHY (1.9 ANGSTROMS) OF 1-191</scope>
    <scope>INTERACTION WITH ARC1</scope>
</reference>
<reference key="17">
    <citation type="journal article" date="2006" name="Nucleic Acids Res.">
        <title>Structural basis of yeast aminoacyl-tRNA synthetase complex formation revealed by crystal structures of two binary sub-complexes.</title>
        <authorList>
            <person name="Simader H."/>
            <person name="Hothorn M."/>
            <person name="Koehler C."/>
            <person name="Basquin J."/>
            <person name="Simos G."/>
            <person name="Suck D."/>
        </authorList>
    </citation>
    <scope>X-RAY CRYSTALLOGRAPHY (3.0 ANGSTROMS) OF 1-191 IN COMPLEX WITH ARC1</scope>
    <scope>MUTAGENESIS OF ARG-148</scope>
</reference>